<sequence length="388" mass="41950">MAKKPKKLEEISKKFGAEREKALNDALKLIEKDFGKGSIMRLGERAEQKVQVMSSGSLALDIALGSGGYPKGRIIEIYGPESSGKTTVALHAVAQAQKEGGIAAFIDAEHALDPAYAAALGVNIDELLLSQPDSGEQGLEIAGKLIDSGAVDLVVVDSVAALVPRAEIDGDIGDSHVGLQARMMSQAMRKLGASINKTKTIAIFINQLREKVGVMFGNPETTPGGRALKFYASVRLDVRGNTQIKGTGDQKETNVGKETKIKVVKNKVAPPFKEAVVEIMYGEGISKTGELLKIASDLDIIKKAGAWYSYKDEKIGQGSENAKKYLAEHPEIFDEIDKQVRSKFGLIDGEEVSEQDTENKKDEPKKEEAVNEEVPLDLGDELEIEIEE</sequence>
<evidence type="ECO:0000255" key="1">
    <source>
        <dbReference type="HAMAP-Rule" id="MF_00268"/>
    </source>
</evidence>
<evidence type="ECO:0000256" key="2">
    <source>
        <dbReference type="SAM" id="MobiDB-lite"/>
    </source>
</evidence>
<accession>P0A451</accession>
<accession>P30758</accession>
<protein>
    <recommendedName>
        <fullName evidence="1">Protein RecA</fullName>
    </recommendedName>
    <alternativeName>
        <fullName evidence="1">Recombinase A</fullName>
    </alternativeName>
</protein>
<keyword id="KW-0067">ATP-binding</keyword>
<keyword id="KW-0963">Cytoplasm</keyword>
<keyword id="KW-0227">DNA damage</keyword>
<keyword id="KW-0233">DNA recombination</keyword>
<keyword id="KW-0234">DNA repair</keyword>
<keyword id="KW-0238">DNA-binding</keyword>
<keyword id="KW-0547">Nucleotide-binding</keyword>
<keyword id="KW-1185">Reference proteome</keyword>
<keyword id="KW-0742">SOS response</keyword>
<proteinExistence type="evidence at transcript level"/>
<comment type="function">
    <text evidence="1">Can catalyze the hydrolysis of ATP in the presence of single-stranded DNA, the ATP-dependent uptake of single-stranded DNA by duplex DNA, and the ATP-dependent hybridization of homologous single-stranded DNAs. It interacts with LexA causing its activation and leading to its autocatalytic cleavage.</text>
</comment>
<comment type="subcellular location">
    <subcellularLocation>
        <location evidence="1">Cytoplasm</location>
    </subcellularLocation>
</comment>
<comment type="induction">
    <text>By competence and damage.</text>
</comment>
<comment type="similarity">
    <text evidence="1">Belongs to the RecA family.</text>
</comment>
<dbReference type="EMBL" id="Z17307">
    <property type="protein sequence ID" value="CAA78955.1"/>
    <property type="molecule type" value="Genomic_DNA"/>
</dbReference>
<dbReference type="EMBL" id="Z34303">
    <property type="protein sequence ID" value="CAA84072.1"/>
    <property type="molecule type" value="Genomic_DNA"/>
</dbReference>
<dbReference type="EMBL" id="AE005672">
    <property type="protein sequence ID" value="AAK76008.1"/>
    <property type="molecule type" value="Genomic_DNA"/>
</dbReference>
<dbReference type="PIR" id="G95226">
    <property type="entry name" value="G95226"/>
</dbReference>
<dbReference type="PIR" id="S30219">
    <property type="entry name" value="S30219"/>
</dbReference>
<dbReference type="RefSeq" id="WP_001085462.1">
    <property type="nucleotide sequence ID" value="NZ_CP155539.1"/>
</dbReference>
<dbReference type="SMR" id="P0A451"/>
<dbReference type="IntAct" id="P0A451">
    <property type="interactions" value="1"/>
</dbReference>
<dbReference type="PaxDb" id="170187-SP_1940"/>
<dbReference type="EnsemblBacteria" id="AAK76008">
    <property type="protein sequence ID" value="AAK76008"/>
    <property type="gene ID" value="SP_1940"/>
</dbReference>
<dbReference type="GeneID" id="45652840"/>
<dbReference type="KEGG" id="spn:SP_1940"/>
<dbReference type="eggNOG" id="COG0468">
    <property type="taxonomic scope" value="Bacteria"/>
</dbReference>
<dbReference type="PhylomeDB" id="P0A451"/>
<dbReference type="BioCyc" id="SPNE170187:G1FZB-1995-MONOMER"/>
<dbReference type="Proteomes" id="UP000000585">
    <property type="component" value="Chromosome"/>
</dbReference>
<dbReference type="GO" id="GO:0005829">
    <property type="term" value="C:cytosol"/>
    <property type="evidence" value="ECO:0007669"/>
    <property type="project" value="TreeGrafter"/>
</dbReference>
<dbReference type="GO" id="GO:0005524">
    <property type="term" value="F:ATP binding"/>
    <property type="evidence" value="ECO:0007669"/>
    <property type="project" value="UniProtKB-UniRule"/>
</dbReference>
<dbReference type="GO" id="GO:0016887">
    <property type="term" value="F:ATP hydrolysis activity"/>
    <property type="evidence" value="ECO:0007669"/>
    <property type="project" value="InterPro"/>
</dbReference>
<dbReference type="GO" id="GO:0140664">
    <property type="term" value="F:ATP-dependent DNA damage sensor activity"/>
    <property type="evidence" value="ECO:0007669"/>
    <property type="project" value="InterPro"/>
</dbReference>
<dbReference type="GO" id="GO:0003684">
    <property type="term" value="F:damaged DNA binding"/>
    <property type="evidence" value="ECO:0007669"/>
    <property type="project" value="UniProtKB-UniRule"/>
</dbReference>
<dbReference type="GO" id="GO:0003697">
    <property type="term" value="F:single-stranded DNA binding"/>
    <property type="evidence" value="ECO:0007669"/>
    <property type="project" value="UniProtKB-UniRule"/>
</dbReference>
<dbReference type="GO" id="GO:0006310">
    <property type="term" value="P:DNA recombination"/>
    <property type="evidence" value="ECO:0007669"/>
    <property type="project" value="UniProtKB-UniRule"/>
</dbReference>
<dbReference type="GO" id="GO:0006281">
    <property type="term" value="P:DNA repair"/>
    <property type="evidence" value="ECO:0007669"/>
    <property type="project" value="UniProtKB-UniRule"/>
</dbReference>
<dbReference type="GO" id="GO:0009432">
    <property type="term" value="P:SOS response"/>
    <property type="evidence" value="ECO:0007669"/>
    <property type="project" value="UniProtKB-UniRule"/>
</dbReference>
<dbReference type="CDD" id="cd00983">
    <property type="entry name" value="RecA"/>
    <property type="match status" value="1"/>
</dbReference>
<dbReference type="FunFam" id="3.40.50.300:FF:000087">
    <property type="entry name" value="Recombinase RecA"/>
    <property type="match status" value="1"/>
</dbReference>
<dbReference type="Gene3D" id="3.40.50.300">
    <property type="entry name" value="P-loop containing nucleotide triphosphate hydrolases"/>
    <property type="match status" value="1"/>
</dbReference>
<dbReference type="HAMAP" id="MF_00268">
    <property type="entry name" value="RecA"/>
    <property type="match status" value="1"/>
</dbReference>
<dbReference type="InterPro" id="IPR003593">
    <property type="entry name" value="AAA+_ATPase"/>
</dbReference>
<dbReference type="InterPro" id="IPR013765">
    <property type="entry name" value="DNA_recomb/repair_RecA"/>
</dbReference>
<dbReference type="InterPro" id="IPR020584">
    <property type="entry name" value="DNA_recomb/repair_RecA_CS"/>
</dbReference>
<dbReference type="InterPro" id="IPR027417">
    <property type="entry name" value="P-loop_NTPase"/>
</dbReference>
<dbReference type="InterPro" id="IPR049261">
    <property type="entry name" value="RecA-like_C"/>
</dbReference>
<dbReference type="InterPro" id="IPR049428">
    <property type="entry name" value="RecA-like_N"/>
</dbReference>
<dbReference type="InterPro" id="IPR020588">
    <property type="entry name" value="RecA_ATP-bd"/>
</dbReference>
<dbReference type="InterPro" id="IPR023400">
    <property type="entry name" value="RecA_C_sf"/>
</dbReference>
<dbReference type="InterPro" id="IPR020587">
    <property type="entry name" value="RecA_monomer-monomer_interface"/>
</dbReference>
<dbReference type="NCBIfam" id="TIGR02012">
    <property type="entry name" value="tigrfam_recA"/>
    <property type="match status" value="1"/>
</dbReference>
<dbReference type="PANTHER" id="PTHR45900:SF1">
    <property type="entry name" value="MITOCHONDRIAL DNA REPAIR PROTEIN RECA HOMOLOG-RELATED"/>
    <property type="match status" value="1"/>
</dbReference>
<dbReference type="PANTHER" id="PTHR45900">
    <property type="entry name" value="RECA"/>
    <property type="match status" value="1"/>
</dbReference>
<dbReference type="Pfam" id="PF00154">
    <property type="entry name" value="RecA"/>
    <property type="match status" value="1"/>
</dbReference>
<dbReference type="Pfam" id="PF21096">
    <property type="entry name" value="RecA_C"/>
    <property type="match status" value="1"/>
</dbReference>
<dbReference type="PRINTS" id="PR00142">
    <property type="entry name" value="RECA"/>
</dbReference>
<dbReference type="SMART" id="SM00382">
    <property type="entry name" value="AAA"/>
    <property type="match status" value="1"/>
</dbReference>
<dbReference type="SUPFAM" id="SSF52540">
    <property type="entry name" value="P-loop containing nucleoside triphosphate hydrolases"/>
    <property type="match status" value="1"/>
</dbReference>
<dbReference type="SUPFAM" id="SSF54752">
    <property type="entry name" value="RecA protein, C-terminal domain"/>
    <property type="match status" value="1"/>
</dbReference>
<dbReference type="PROSITE" id="PS00321">
    <property type="entry name" value="RECA_1"/>
    <property type="match status" value="1"/>
</dbReference>
<dbReference type="PROSITE" id="PS50162">
    <property type="entry name" value="RECA_2"/>
    <property type="match status" value="1"/>
</dbReference>
<dbReference type="PROSITE" id="PS50163">
    <property type="entry name" value="RECA_3"/>
    <property type="match status" value="1"/>
</dbReference>
<reference key="1">
    <citation type="journal article" date="1992" name="Nucleic Acids Res.">
        <title>Identification of the recA gene of Streptococcus pneumoniae.</title>
        <authorList>
            <person name="Martin B."/>
            <person name="Ruellan J.M."/>
            <person name="Angulo J."/>
            <person name="Devoret R."/>
            <person name="Claverys J.-P."/>
        </authorList>
    </citation>
    <scope>NUCLEOTIDE SEQUENCE [GENOMIC DNA]</scope>
</reference>
<reference key="2">
    <citation type="journal article" date="2001" name="Science">
        <title>Complete genome sequence of a virulent isolate of Streptococcus pneumoniae.</title>
        <authorList>
            <person name="Tettelin H."/>
            <person name="Nelson K.E."/>
            <person name="Paulsen I.T."/>
            <person name="Eisen J.A."/>
            <person name="Read T.D."/>
            <person name="Peterson S.N."/>
            <person name="Heidelberg J.F."/>
            <person name="DeBoy R.T."/>
            <person name="Haft D.H."/>
            <person name="Dodson R.J."/>
            <person name="Durkin A.S."/>
            <person name="Gwinn M.L."/>
            <person name="Kolonay J.F."/>
            <person name="Nelson W.C."/>
            <person name="Peterson J.D."/>
            <person name="Umayam L.A."/>
            <person name="White O."/>
            <person name="Salzberg S.L."/>
            <person name="Lewis M.R."/>
            <person name="Radune D."/>
            <person name="Holtzapple E.K."/>
            <person name="Khouri H.M."/>
            <person name="Wolf A.M."/>
            <person name="Utterback T.R."/>
            <person name="Hansen C.L."/>
            <person name="McDonald L.A."/>
            <person name="Feldblyum T.V."/>
            <person name="Angiuoli S.V."/>
            <person name="Dickinson T."/>
            <person name="Hickey E.K."/>
            <person name="Holt I.E."/>
            <person name="Loftus B.J."/>
            <person name="Yang F."/>
            <person name="Smith H.O."/>
            <person name="Venter J.C."/>
            <person name="Dougherty B.A."/>
            <person name="Morrison D.A."/>
            <person name="Hollingshead S.K."/>
            <person name="Fraser C.M."/>
        </authorList>
    </citation>
    <scope>NUCLEOTIDE SEQUENCE [LARGE SCALE GENOMIC DNA]</scope>
    <source>
        <strain>ATCC BAA-334 / TIGR4</strain>
    </source>
</reference>
<name>RECA_STRPN</name>
<feature type="chain" id="PRO_0000122859" description="Protein RecA">
    <location>
        <begin position="1"/>
        <end position="388"/>
    </location>
</feature>
<feature type="region of interest" description="Disordered" evidence="2">
    <location>
        <begin position="347"/>
        <end position="388"/>
    </location>
</feature>
<feature type="compositionally biased region" description="Basic and acidic residues" evidence="2">
    <location>
        <begin position="357"/>
        <end position="369"/>
    </location>
</feature>
<feature type="compositionally biased region" description="Acidic residues" evidence="2">
    <location>
        <begin position="370"/>
        <end position="388"/>
    </location>
</feature>
<feature type="binding site" evidence="1">
    <location>
        <begin position="79"/>
        <end position="86"/>
    </location>
    <ligand>
        <name>ATP</name>
        <dbReference type="ChEBI" id="CHEBI:30616"/>
    </ligand>
</feature>
<gene>
    <name evidence="1" type="primary">recA</name>
    <name type="ordered locus">SP_1940</name>
</gene>
<organism>
    <name type="scientific">Streptococcus pneumoniae serotype 4 (strain ATCC BAA-334 / TIGR4)</name>
    <dbReference type="NCBI Taxonomy" id="170187"/>
    <lineage>
        <taxon>Bacteria</taxon>
        <taxon>Bacillati</taxon>
        <taxon>Bacillota</taxon>
        <taxon>Bacilli</taxon>
        <taxon>Lactobacillales</taxon>
        <taxon>Streptococcaceae</taxon>
        <taxon>Streptococcus</taxon>
    </lineage>
</organism>